<feature type="signal peptide" evidence="5">
    <location>
        <begin position="1" status="less than"/>
        <end position="6"/>
    </location>
</feature>
<feature type="chain" id="PRO_0000447457" description="Sodium channel neurotoxin MeuNaTxalpha-12" evidence="6">
    <location>
        <begin position="7"/>
        <end position="70"/>
    </location>
</feature>
<feature type="propeptide" id="PRO_0000447458" description="Removed by a carboxypeptidase" evidence="5">
    <location>
        <position position="71"/>
    </location>
</feature>
<feature type="domain" description="LCN-type CS-alpha/beta" evidence="2">
    <location>
        <begin position="8"/>
        <end position="70"/>
    </location>
</feature>
<feature type="disulfide bond" evidence="1">
    <location>
        <begin position="18"/>
        <end position="69"/>
    </location>
</feature>
<feature type="disulfide bond" evidence="1">
    <location>
        <begin position="22"/>
        <end position="42"/>
    </location>
</feature>
<feature type="disulfide bond" evidence="1">
    <location>
        <begin position="28"/>
        <end position="52"/>
    </location>
</feature>
<feature type="disulfide bond" evidence="1">
    <location>
        <begin position="32"/>
        <end position="54"/>
    </location>
</feature>
<feature type="non-terminal residue" evidence="7">
    <location>
        <position position="1"/>
    </location>
</feature>
<sequence length="71" mass="7819">MTGVESARDAYIAQGNNCVYQCALNSSCNELCTKNGAKSGYCQWFGKHGNACWCIELPDNVPIRIQGKCQR</sequence>
<evidence type="ECO:0000250" key="1">
    <source>
        <dbReference type="UniProtKB" id="P86405"/>
    </source>
</evidence>
<evidence type="ECO:0000255" key="2">
    <source>
        <dbReference type="PROSITE-ProRule" id="PRU01210"/>
    </source>
</evidence>
<evidence type="ECO:0000269" key="3">
    <source>
    </source>
</evidence>
<evidence type="ECO:0000303" key="4">
    <source>
    </source>
</evidence>
<evidence type="ECO:0000305" key="5"/>
<evidence type="ECO:0000305" key="6">
    <source>
    </source>
</evidence>
<evidence type="ECO:0000312" key="7">
    <source>
        <dbReference type="EMBL" id="ADT82854.1"/>
    </source>
</evidence>
<accession>E7CZZ1</accession>
<reference key="1">
    <citation type="journal article" date="2012" name="Mol. Cell. Proteomics">
        <title>Evolutionary diversification of Mesobuthus alpha-scorpion toxins affecting sodium channels.</title>
        <authorList>
            <person name="Zhu S."/>
            <person name="Peigneur S."/>
            <person name="Gao B."/>
            <person name="Lu X."/>
            <person name="Cao C."/>
            <person name="Tytgat J."/>
        </authorList>
    </citation>
    <scope>NUCLEOTIDE SEQUENCE [MRNA]</scope>
    <source>
        <tissue>Venom gland</tissue>
    </source>
</reference>
<name>SCXNC_MESEU</name>
<proteinExistence type="evidence at transcript level"/>
<keyword id="KW-1015">Disulfide bond</keyword>
<keyword id="KW-0872">Ion channel impairing toxin</keyword>
<keyword id="KW-0528">Neurotoxin</keyword>
<keyword id="KW-0964">Secreted</keyword>
<keyword id="KW-0732">Signal</keyword>
<keyword id="KW-0800">Toxin</keyword>
<keyword id="KW-0738">Voltage-gated sodium channel impairing toxin</keyword>
<comment type="function">
    <text evidence="1">Alpha toxins bind voltage-independently at site-3 of sodium channels (Nav) and inhibit the inactivation of the activated channels, thereby blocking neuronal transmission.</text>
</comment>
<comment type="subcellular location">
    <subcellularLocation>
        <location evidence="3">Secreted</location>
    </subcellularLocation>
</comment>
<comment type="tissue specificity">
    <text evidence="6">Expressed by the venom gland.</text>
</comment>
<comment type="domain">
    <text evidence="5">Has the structural arrangement of an alpha-helix connected to antiparallel beta-sheets by disulfide bonds (CS-alpha/beta).</text>
</comment>
<comment type="similarity">
    <text evidence="5">Belongs to the long (4 C-C) scorpion toxin superfamily. Sodium channel inhibitor family. Alpha subfamily.</text>
</comment>
<organism>
    <name type="scientific">Mesobuthus eupeus</name>
    <name type="common">Lesser Asian scorpion</name>
    <name type="synonym">Buthus eupeus</name>
    <dbReference type="NCBI Taxonomy" id="34648"/>
    <lineage>
        <taxon>Eukaryota</taxon>
        <taxon>Metazoa</taxon>
        <taxon>Ecdysozoa</taxon>
        <taxon>Arthropoda</taxon>
        <taxon>Chelicerata</taxon>
        <taxon>Arachnida</taxon>
        <taxon>Scorpiones</taxon>
        <taxon>Buthida</taxon>
        <taxon>Buthoidea</taxon>
        <taxon>Buthidae</taxon>
        <taxon>Mesobuthus</taxon>
    </lineage>
</organism>
<protein>
    <recommendedName>
        <fullName evidence="4">Sodium channel neurotoxin MeuNaTxalpha-12</fullName>
    </recommendedName>
</protein>
<dbReference type="EMBL" id="HM989914">
    <property type="protein sequence ID" value="ADT82854.1"/>
    <property type="molecule type" value="mRNA"/>
</dbReference>
<dbReference type="SMR" id="E7CZZ1"/>
<dbReference type="GO" id="GO:0005576">
    <property type="term" value="C:extracellular region"/>
    <property type="evidence" value="ECO:0007669"/>
    <property type="project" value="UniProtKB-SubCell"/>
</dbReference>
<dbReference type="GO" id="GO:0019871">
    <property type="term" value="F:sodium channel inhibitor activity"/>
    <property type="evidence" value="ECO:0007669"/>
    <property type="project" value="InterPro"/>
</dbReference>
<dbReference type="GO" id="GO:0090729">
    <property type="term" value="F:toxin activity"/>
    <property type="evidence" value="ECO:0007669"/>
    <property type="project" value="UniProtKB-KW"/>
</dbReference>
<dbReference type="GO" id="GO:0006952">
    <property type="term" value="P:defense response"/>
    <property type="evidence" value="ECO:0007669"/>
    <property type="project" value="InterPro"/>
</dbReference>
<dbReference type="CDD" id="cd23106">
    <property type="entry name" value="neurotoxins_LC_scorpion"/>
    <property type="match status" value="1"/>
</dbReference>
<dbReference type="FunFam" id="3.30.30.10:FF:000002">
    <property type="entry name" value="Alpha-like toxin BmK-M1"/>
    <property type="match status" value="1"/>
</dbReference>
<dbReference type="Gene3D" id="3.30.30.10">
    <property type="entry name" value="Knottin, scorpion toxin-like"/>
    <property type="match status" value="1"/>
</dbReference>
<dbReference type="InterPro" id="IPR044062">
    <property type="entry name" value="LCN-type_CS_alpha_beta_dom"/>
</dbReference>
<dbReference type="InterPro" id="IPR003614">
    <property type="entry name" value="Scorpion_toxin-like"/>
</dbReference>
<dbReference type="InterPro" id="IPR036574">
    <property type="entry name" value="Scorpion_toxin-like_sf"/>
</dbReference>
<dbReference type="InterPro" id="IPR018218">
    <property type="entry name" value="Scorpion_toxinL"/>
</dbReference>
<dbReference type="InterPro" id="IPR002061">
    <property type="entry name" value="Scorpion_toxinL/defensin"/>
</dbReference>
<dbReference type="Pfam" id="PF00537">
    <property type="entry name" value="Toxin_3"/>
    <property type="match status" value="1"/>
</dbReference>
<dbReference type="PRINTS" id="PR00285">
    <property type="entry name" value="SCORPNTOXIN"/>
</dbReference>
<dbReference type="SMART" id="SM00505">
    <property type="entry name" value="Knot1"/>
    <property type="match status" value="1"/>
</dbReference>
<dbReference type="SUPFAM" id="SSF57095">
    <property type="entry name" value="Scorpion toxin-like"/>
    <property type="match status" value="1"/>
</dbReference>
<dbReference type="PROSITE" id="PS51863">
    <property type="entry name" value="LCN_CSAB"/>
    <property type="match status" value="1"/>
</dbReference>